<sequence length="289" mass="31252">MFGSAHGDTTSSDTSGRRPLRLVVLPLLLALSSCKVDLYTQLQEREANEMLALLMDSGVDAVRVAGKDGTSTIQVDEKLLAFSIKLLNAKGLPRQSFKNLGEIFQGSGLIASPTEERARYVYALSEELSHTISDIDGVFSARVHVVLPHNDLLRAGDTPSSASVFIRHDAKTNLPALLPKIKMLVAESIEGLAYDKVEVVLVPVERSAQEQRSLLATDLAQASRPIPEPLLAVAVGVSAAVFAVTCYLLFIVLGHRRRQLTGELSRVQERPGVSALAAIRKKIPGLGRR</sequence>
<accession>P55714</accession>
<name>NOLT_SINFN</name>
<gene>
    <name type="primary">nolT</name>
    <name type="ordered locus">NGR_a00670</name>
    <name type="ORF">y4yF</name>
</gene>
<keyword id="KW-0998">Cell outer membrane</keyword>
<keyword id="KW-0449">Lipoprotein</keyword>
<keyword id="KW-0472">Membrane</keyword>
<keyword id="KW-0536">Nodulation</keyword>
<keyword id="KW-0564">Palmitate</keyword>
<keyword id="KW-0614">Plasmid</keyword>
<keyword id="KW-1185">Reference proteome</keyword>
<keyword id="KW-0732">Signal</keyword>
<keyword id="KW-0812">Transmembrane</keyword>
<keyword id="KW-1133">Transmembrane helix</keyword>
<dbReference type="EMBL" id="U00090">
    <property type="protein sequence ID" value="AAB91945.1"/>
    <property type="molecule type" value="Genomic_DNA"/>
</dbReference>
<dbReference type="RefSeq" id="NP_444158.1">
    <property type="nucleotide sequence ID" value="NC_000914.2"/>
</dbReference>
<dbReference type="RefSeq" id="WP_010875108.1">
    <property type="nucleotide sequence ID" value="NC_000914.2"/>
</dbReference>
<dbReference type="SMR" id="P55714"/>
<dbReference type="KEGG" id="rhi:NGR_a00670"/>
<dbReference type="eggNOG" id="COG4669">
    <property type="taxonomic scope" value="Bacteria"/>
</dbReference>
<dbReference type="HOGENOM" id="CLU_073268_0_0_5"/>
<dbReference type="OrthoDB" id="9807026at2"/>
<dbReference type="Proteomes" id="UP000001054">
    <property type="component" value="Plasmid pNGR234a"/>
</dbReference>
<dbReference type="GO" id="GO:0009279">
    <property type="term" value="C:cell outer membrane"/>
    <property type="evidence" value="ECO:0007669"/>
    <property type="project" value="UniProtKB-SubCell"/>
</dbReference>
<dbReference type="GO" id="GO:0009306">
    <property type="term" value="P:protein secretion"/>
    <property type="evidence" value="ECO:0007669"/>
    <property type="project" value="InterPro"/>
</dbReference>
<dbReference type="Gene3D" id="3.30.300.30">
    <property type="match status" value="1"/>
</dbReference>
<dbReference type="Gene3D" id="3.30.70.1530">
    <property type="entry name" value="Hypothetical protein rpa1041"/>
    <property type="match status" value="1"/>
</dbReference>
<dbReference type="InterPro" id="IPR045851">
    <property type="entry name" value="AMP-bd_C_sf"/>
</dbReference>
<dbReference type="InterPro" id="IPR006182">
    <property type="entry name" value="FliF_N_dom"/>
</dbReference>
<dbReference type="InterPro" id="IPR003282">
    <property type="entry name" value="T3SS_SctJ"/>
</dbReference>
<dbReference type="InterPro" id="IPR043427">
    <property type="entry name" value="YscJ/FliF"/>
</dbReference>
<dbReference type="NCBIfam" id="TIGR02544">
    <property type="entry name" value="III_secr_YscJ"/>
    <property type="match status" value="1"/>
</dbReference>
<dbReference type="PANTHER" id="PTHR30046">
    <property type="entry name" value="FLAGELLAR M-RING PROTEIN"/>
    <property type="match status" value="1"/>
</dbReference>
<dbReference type="PANTHER" id="PTHR30046:SF2">
    <property type="entry name" value="YOP PROTEINS TRANSLOCATION LIPOPROTEIN J"/>
    <property type="match status" value="1"/>
</dbReference>
<dbReference type="Pfam" id="PF01514">
    <property type="entry name" value="YscJ_FliF"/>
    <property type="match status" value="1"/>
</dbReference>
<dbReference type="PRINTS" id="PR01338">
    <property type="entry name" value="TYPE3OMKPROT"/>
</dbReference>
<geneLocation type="plasmid">
    <name>sym pNGR234a</name>
</geneLocation>
<proteinExistence type="inferred from homology"/>
<protein>
    <recommendedName>
        <fullName>Nodulation protein NolT</fullName>
    </recommendedName>
</protein>
<organism>
    <name type="scientific">Sinorhizobium fredii (strain NBRC 101917 / NGR234)</name>
    <dbReference type="NCBI Taxonomy" id="394"/>
    <lineage>
        <taxon>Bacteria</taxon>
        <taxon>Pseudomonadati</taxon>
        <taxon>Pseudomonadota</taxon>
        <taxon>Alphaproteobacteria</taxon>
        <taxon>Hyphomicrobiales</taxon>
        <taxon>Rhizobiaceae</taxon>
        <taxon>Sinorhizobium/Ensifer group</taxon>
        <taxon>Sinorhizobium</taxon>
    </lineage>
</organism>
<feature type="signal peptide" evidence="2">
    <location>
        <begin position="1"/>
        <end position="33"/>
    </location>
</feature>
<feature type="chain" id="PRO_0000018228" description="Nodulation protein NolT">
    <location>
        <begin position="34"/>
        <end position="289"/>
    </location>
</feature>
<feature type="transmembrane region" description="Helical" evidence="1">
    <location>
        <begin position="233"/>
        <end position="253"/>
    </location>
</feature>
<feature type="lipid moiety-binding region" description="N-palmitoyl cysteine" evidence="1">
    <location>
        <position position="34"/>
    </location>
</feature>
<feature type="lipid moiety-binding region" description="S-diacylglycerol cysteine" evidence="1">
    <location>
        <position position="34"/>
    </location>
</feature>
<comment type="subcellular location">
    <subcellularLocation>
        <location evidence="2">Cell outer membrane</location>
        <topology evidence="2">Lipid-anchor</topology>
    </subcellularLocation>
</comment>
<comment type="similarity">
    <text evidence="2">Belongs to the YscJ lipoprotein family.</text>
</comment>
<reference key="1">
    <citation type="journal article" date="1997" name="Nature">
        <title>Molecular basis of symbiosis between Rhizobium and legumes.</title>
        <authorList>
            <person name="Freiberg C.A."/>
            <person name="Fellay R."/>
            <person name="Bairoch A."/>
            <person name="Broughton W.J."/>
            <person name="Rosenthal A."/>
            <person name="Perret X."/>
        </authorList>
    </citation>
    <scope>NUCLEOTIDE SEQUENCE [LARGE SCALE GENOMIC DNA]</scope>
    <source>
        <strain>NBRC 101917 / NGR234</strain>
    </source>
</reference>
<reference key="2">
    <citation type="journal article" date="2009" name="Appl. Environ. Microbiol.">
        <title>Rhizobium sp. strain NGR234 possesses a remarkable number of secretion systems.</title>
        <authorList>
            <person name="Schmeisser C."/>
            <person name="Liesegang H."/>
            <person name="Krysciak D."/>
            <person name="Bakkou N."/>
            <person name="Le Quere A."/>
            <person name="Wollherr A."/>
            <person name="Heinemeyer I."/>
            <person name="Morgenstern B."/>
            <person name="Pommerening-Roeser A."/>
            <person name="Flores M."/>
            <person name="Palacios R."/>
            <person name="Brenner S."/>
            <person name="Gottschalk G."/>
            <person name="Schmitz R.A."/>
            <person name="Broughton W.J."/>
            <person name="Perret X."/>
            <person name="Strittmatter A.W."/>
            <person name="Streit W.R."/>
        </authorList>
    </citation>
    <scope>NUCLEOTIDE SEQUENCE [LARGE SCALE GENOMIC DNA]</scope>
    <source>
        <strain>NBRC 101917 / NGR234</strain>
    </source>
</reference>
<evidence type="ECO:0000255" key="1"/>
<evidence type="ECO:0000305" key="2"/>